<gene>
    <name type="primary">TRIM22</name>
    <name type="synonym">RNF94</name>
    <name type="synonym">STAF50</name>
</gene>
<keyword id="KW-0025">Alternative splicing</keyword>
<keyword id="KW-0051">Antiviral defense</keyword>
<keyword id="KW-0175">Coiled coil</keyword>
<keyword id="KW-0963">Cytoplasm</keyword>
<keyword id="KW-0945">Host-virus interaction</keyword>
<keyword id="KW-0479">Metal-binding</keyword>
<keyword id="KW-0539">Nucleus</keyword>
<keyword id="KW-1267">Proteomics identification</keyword>
<keyword id="KW-1185">Reference proteome</keyword>
<keyword id="KW-0678">Repressor</keyword>
<keyword id="KW-0804">Transcription</keyword>
<keyword id="KW-0805">Transcription regulation</keyword>
<keyword id="KW-0808">Transferase</keyword>
<keyword id="KW-0832">Ubl conjugation</keyword>
<keyword id="KW-0833">Ubl conjugation pathway</keyword>
<keyword id="KW-0862">Zinc</keyword>
<keyword id="KW-0863">Zinc-finger</keyword>
<protein>
    <recommendedName>
        <fullName>E3 ubiquitin-protein ligase TRIM22</fullName>
        <ecNumber evidence="9 14">2.3.2.27</ecNumber>
    </recommendedName>
    <alternativeName>
        <fullName>50 kDa-stimulated trans-acting factor</fullName>
    </alternativeName>
    <alternativeName>
        <fullName>RING finger protein 94</fullName>
    </alternativeName>
    <alternativeName>
        <fullName evidence="21">RING-type E3 ubiquitin transferase TRIM22</fullName>
    </alternativeName>
    <alternativeName>
        <fullName>Staf-50</fullName>
    </alternativeName>
    <alternativeName>
        <fullName>Tripartite motif-containing protein 22</fullName>
    </alternativeName>
</protein>
<accession>Q8IYM9</accession>
<accession>Q05CQ0</accession>
<accession>Q15521</accession>
<dbReference type="EC" id="2.3.2.27" evidence="9 14"/>
<dbReference type="EMBL" id="X82200">
    <property type="protein sequence ID" value="CAA57684.1"/>
    <property type="status" value="ALT_FRAME"/>
    <property type="molecule type" value="mRNA"/>
</dbReference>
<dbReference type="EMBL" id="BC022281">
    <property type="protein sequence ID" value="AAH22281.1"/>
    <property type="molecule type" value="mRNA"/>
</dbReference>
<dbReference type="EMBL" id="BC035582">
    <property type="protein sequence ID" value="AAH35582.1"/>
    <property type="molecule type" value="mRNA"/>
</dbReference>
<dbReference type="CCDS" id="CCDS41612.1">
    <molecule id="Q8IYM9-1"/>
</dbReference>
<dbReference type="PIR" id="A57041">
    <property type="entry name" value="A57041"/>
</dbReference>
<dbReference type="RefSeq" id="NP_001186502.1">
    <molecule id="Q8IYM9-2"/>
    <property type="nucleotide sequence ID" value="NM_001199573.2"/>
</dbReference>
<dbReference type="RefSeq" id="NP_006065.2">
    <molecule id="Q8IYM9-1"/>
    <property type="nucleotide sequence ID" value="NM_006074.5"/>
</dbReference>
<dbReference type="SMR" id="Q8IYM9"/>
<dbReference type="BioGRID" id="115628">
    <property type="interactions" value="31"/>
</dbReference>
<dbReference type="FunCoup" id="Q8IYM9">
    <property type="interactions" value="458"/>
</dbReference>
<dbReference type="IntAct" id="Q8IYM9">
    <property type="interactions" value="18"/>
</dbReference>
<dbReference type="MINT" id="Q8IYM9"/>
<dbReference type="STRING" id="9606.ENSP00000369299"/>
<dbReference type="iPTMnet" id="Q8IYM9"/>
<dbReference type="PhosphoSitePlus" id="Q8IYM9"/>
<dbReference type="SwissPalm" id="Q8IYM9"/>
<dbReference type="BioMuta" id="TRIM22"/>
<dbReference type="DMDM" id="47606181"/>
<dbReference type="jPOST" id="Q8IYM9"/>
<dbReference type="MassIVE" id="Q8IYM9"/>
<dbReference type="PaxDb" id="9606-ENSP00000369299"/>
<dbReference type="PeptideAtlas" id="Q8IYM9"/>
<dbReference type="ProteomicsDB" id="71205">
    <molecule id="Q8IYM9-1"/>
</dbReference>
<dbReference type="ProteomicsDB" id="71206">
    <molecule id="Q8IYM9-2"/>
</dbReference>
<dbReference type="Pumba" id="Q8IYM9"/>
<dbReference type="Antibodypedia" id="1279">
    <property type="antibodies" value="285 antibodies from 26 providers"/>
</dbReference>
<dbReference type="DNASU" id="10346"/>
<dbReference type="Ensembl" id="ENST00000379965.8">
    <molecule id="Q8IYM9-1"/>
    <property type="protein sequence ID" value="ENSP00000369299.3"/>
    <property type="gene ID" value="ENSG00000132274.17"/>
</dbReference>
<dbReference type="GeneID" id="10346"/>
<dbReference type="KEGG" id="hsa:10346"/>
<dbReference type="MANE-Select" id="ENST00000379965.8">
    <property type="protein sequence ID" value="ENSP00000369299.3"/>
    <property type="RefSeq nucleotide sequence ID" value="NM_006074.5"/>
    <property type="RefSeq protein sequence ID" value="NP_006065.2"/>
</dbReference>
<dbReference type="UCSC" id="uc001mbr.4">
    <molecule id="Q8IYM9-1"/>
    <property type="organism name" value="human"/>
</dbReference>
<dbReference type="AGR" id="HGNC:16379"/>
<dbReference type="CTD" id="10346"/>
<dbReference type="DisGeNET" id="10346"/>
<dbReference type="GeneCards" id="TRIM22"/>
<dbReference type="HGNC" id="HGNC:16379">
    <property type="gene designation" value="TRIM22"/>
</dbReference>
<dbReference type="HPA" id="ENSG00000132274">
    <property type="expression patterns" value="Low tissue specificity"/>
</dbReference>
<dbReference type="MalaCards" id="TRIM22"/>
<dbReference type="MIM" id="606559">
    <property type="type" value="gene"/>
</dbReference>
<dbReference type="neXtProt" id="NX_Q8IYM9"/>
<dbReference type="OpenTargets" id="ENSG00000132274"/>
<dbReference type="Orphanet" id="597201">
    <property type="disease" value="TRIM22-related inflammatory bowel disease"/>
</dbReference>
<dbReference type="PharmGKB" id="PA38129"/>
<dbReference type="VEuPathDB" id="HostDB:ENSG00000132274"/>
<dbReference type="eggNOG" id="KOG2177">
    <property type="taxonomic scope" value="Eukaryota"/>
</dbReference>
<dbReference type="GeneTree" id="ENSGT00940000163787"/>
<dbReference type="HOGENOM" id="CLU_013137_0_3_1"/>
<dbReference type="InParanoid" id="Q8IYM9"/>
<dbReference type="OMA" id="TWKNHMQ"/>
<dbReference type="OrthoDB" id="264917at2759"/>
<dbReference type="PAN-GO" id="Q8IYM9">
    <property type="GO annotations" value="13 GO annotations based on evolutionary models"/>
</dbReference>
<dbReference type="PhylomeDB" id="Q8IYM9"/>
<dbReference type="TreeFam" id="TF342569"/>
<dbReference type="BRENDA" id="2.3.2.27">
    <property type="organism ID" value="2681"/>
</dbReference>
<dbReference type="PathwayCommons" id="Q8IYM9"/>
<dbReference type="Reactome" id="R-HSA-877300">
    <property type="pathway name" value="Interferon gamma signaling"/>
</dbReference>
<dbReference type="SignaLink" id="Q8IYM9"/>
<dbReference type="SIGNOR" id="Q8IYM9"/>
<dbReference type="UniPathway" id="UPA00143"/>
<dbReference type="BioGRID-ORCS" id="10346">
    <property type="hits" value="3 hits in 1183 CRISPR screens"/>
</dbReference>
<dbReference type="CD-CODE" id="6F24707C">
    <property type="entry name" value="Cajal body"/>
</dbReference>
<dbReference type="CD-CODE" id="8C2F96ED">
    <property type="entry name" value="Centrosome"/>
</dbReference>
<dbReference type="ChiTaRS" id="TRIM22">
    <property type="organism name" value="human"/>
</dbReference>
<dbReference type="GeneWiki" id="TRIM22"/>
<dbReference type="GenomeRNAi" id="10346"/>
<dbReference type="Pharos" id="Q8IYM9">
    <property type="development level" value="Tbio"/>
</dbReference>
<dbReference type="PRO" id="PR:Q8IYM9"/>
<dbReference type="Proteomes" id="UP000005640">
    <property type="component" value="Chromosome 11"/>
</dbReference>
<dbReference type="RNAct" id="Q8IYM9">
    <property type="molecule type" value="protein"/>
</dbReference>
<dbReference type="Bgee" id="ENSG00000132274">
    <property type="expression patterns" value="Expressed in monocyte and 202 other cell types or tissues"/>
</dbReference>
<dbReference type="ExpressionAtlas" id="Q8IYM9">
    <property type="expression patterns" value="baseline and differential"/>
</dbReference>
<dbReference type="GO" id="GO:0015030">
    <property type="term" value="C:Cajal body"/>
    <property type="evidence" value="ECO:0007669"/>
    <property type="project" value="UniProtKB-SubCell"/>
</dbReference>
<dbReference type="GO" id="GO:0005737">
    <property type="term" value="C:cytoplasm"/>
    <property type="evidence" value="ECO:0000314"/>
    <property type="project" value="UniProtKB"/>
</dbReference>
<dbReference type="GO" id="GO:0005829">
    <property type="term" value="C:cytosol"/>
    <property type="evidence" value="ECO:0000304"/>
    <property type="project" value="Reactome"/>
</dbReference>
<dbReference type="GO" id="GO:0005794">
    <property type="term" value="C:Golgi apparatus"/>
    <property type="evidence" value="ECO:0000314"/>
    <property type="project" value="HPA"/>
</dbReference>
<dbReference type="GO" id="GO:0016604">
    <property type="term" value="C:nuclear body"/>
    <property type="evidence" value="ECO:0000314"/>
    <property type="project" value="HPA"/>
</dbReference>
<dbReference type="GO" id="GO:0016607">
    <property type="term" value="C:nuclear speck"/>
    <property type="evidence" value="ECO:0007669"/>
    <property type="project" value="UniProtKB-SubCell"/>
</dbReference>
<dbReference type="GO" id="GO:0005654">
    <property type="term" value="C:nucleoplasm"/>
    <property type="evidence" value="ECO:0000314"/>
    <property type="project" value="HPA"/>
</dbReference>
<dbReference type="GO" id="GO:0005634">
    <property type="term" value="C:nucleus"/>
    <property type="evidence" value="ECO:0000314"/>
    <property type="project" value="UniProtKB"/>
</dbReference>
<dbReference type="GO" id="GO:0042802">
    <property type="term" value="F:identical protein binding"/>
    <property type="evidence" value="ECO:0000353"/>
    <property type="project" value="UniProtKB"/>
</dbReference>
<dbReference type="GO" id="GO:0019901">
    <property type="term" value="F:protein kinase binding"/>
    <property type="evidence" value="ECO:0000353"/>
    <property type="project" value="UniProtKB"/>
</dbReference>
<dbReference type="GO" id="GO:0030674">
    <property type="term" value="F:protein-macromolecule adaptor activity"/>
    <property type="evidence" value="ECO:0000353"/>
    <property type="project" value="UniProtKB"/>
</dbReference>
<dbReference type="GO" id="GO:0003713">
    <property type="term" value="F:transcription coactivator activity"/>
    <property type="evidence" value="ECO:0000314"/>
    <property type="project" value="ARUK-UCL"/>
</dbReference>
<dbReference type="GO" id="GO:0003714">
    <property type="term" value="F:transcription corepressor activity"/>
    <property type="evidence" value="ECO:0000304"/>
    <property type="project" value="ProtInc"/>
</dbReference>
<dbReference type="GO" id="GO:0061630">
    <property type="term" value="F:ubiquitin protein ligase activity"/>
    <property type="evidence" value="ECO:0000314"/>
    <property type="project" value="UniProt"/>
</dbReference>
<dbReference type="GO" id="GO:0008270">
    <property type="term" value="F:zinc ion binding"/>
    <property type="evidence" value="ECO:0007669"/>
    <property type="project" value="UniProtKB-KW"/>
</dbReference>
<dbReference type="GO" id="GO:0051607">
    <property type="term" value="P:defense response to virus"/>
    <property type="evidence" value="ECO:0007669"/>
    <property type="project" value="UniProtKB-KW"/>
</dbReference>
<dbReference type="GO" id="GO:0006955">
    <property type="term" value="P:immune response"/>
    <property type="evidence" value="ECO:0000304"/>
    <property type="project" value="ProtInc"/>
</dbReference>
<dbReference type="GO" id="GO:0045087">
    <property type="term" value="P:innate immune response"/>
    <property type="evidence" value="ECO:0000318"/>
    <property type="project" value="GO_Central"/>
</dbReference>
<dbReference type="GO" id="GO:0010508">
    <property type="term" value="P:positive regulation of autophagy"/>
    <property type="evidence" value="ECO:0000315"/>
    <property type="project" value="UniProtKB"/>
</dbReference>
<dbReference type="GO" id="GO:0043123">
    <property type="term" value="P:positive regulation of canonical NF-kappaB signal transduction"/>
    <property type="evidence" value="ECO:0000314"/>
    <property type="project" value="UniProtKB"/>
</dbReference>
<dbReference type="GO" id="GO:0002230">
    <property type="term" value="P:positive regulation of defense response to virus by host"/>
    <property type="evidence" value="ECO:0000314"/>
    <property type="project" value="UniProt"/>
</dbReference>
<dbReference type="GO" id="GO:0051091">
    <property type="term" value="P:positive regulation of DNA-binding transcription factor activity"/>
    <property type="evidence" value="ECO:0000314"/>
    <property type="project" value="UniProtKB"/>
</dbReference>
<dbReference type="GO" id="GO:0051092">
    <property type="term" value="P:positive regulation of NF-kappaB transcription factor activity"/>
    <property type="evidence" value="ECO:0000314"/>
    <property type="project" value="UniProtKB"/>
</dbReference>
<dbReference type="GO" id="GO:0070534">
    <property type="term" value="P:protein K63-linked ubiquitination"/>
    <property type="evidence" value="ECO:0000314"/>
    <property type="project" value="UniProt"/>
</dbReference>
<dbReference type="GO" id="GO:0006355">
    <property type="term" value="P:regulation of DNA-templated transcription"/>
    <property type="evidence" value="ECO:0000304"/>
    <property type="project" value="ProtInc"/>
</dbReference>
<dbReference type="GO" id="GO:0010468">
    <property type="term" value="P:regulation of gene expression"/>
    <property type="evidence" value="ECO:0000318"/>
    <property type="project" value="GO_Central"/>
</dbReference>
<dbReference type="GO" id="GO:0032880">
    <property type="term" value="P:regulation of protein localization"/>
    <property type="evidence" value="ECO:0000315"/>
    <property type="project" value="UniProtKB"/>
</dbReference>
<dbReference type="GO" id="GO:0009615">
    <property type="term" value="P:response to virus"/>
    <property type="evidence" value="ECO:0000304"/>
    <property type="project" value="ProtInc"/>
</dbReference>
<dbReference type="CDD" id="cd19761">
    <property type="entry name" value="Bbox2_TRIM5-like"/>
    <property type="match status" value="1"/>
</dbReference>
<dbReference type="CDD" id="cd16591">
    <property type="entry name" value="RING-HC_TRIM5-like_C-IV"/>
    <property type="match status" value="1"/>
</dbReference>
<dbReference type="CDD" id="cd15824">
    <property type="entry name" value="SPRY_PRY_TRIM22"/>
    <property type="match status" value="1"/>
</dbReference>
<dbReference type="FunFam" id="2.60.120.920:FF:000023">
    <property type="entry name" value="Tripartite motif-containing 5 (Predicted)"/>
    <property type="match status" value="1"/>
</dbReference>
<dbReference type="FunFam" id="3.30.160.60:FF:000386">
    <property type="entry name" value="Tripartite motif-containing 5 (Predicted)"/>
    <property type="match status" value="1"/>
</dbReference>
<dbReference type="FunFam" id="3.30.40.10:FF:000144">
    <property type="entry name" value="Tripartite motif-containing 5 (Predicted)"/>
    <property type="match status" value="1"/>
</dbReference>
<dbReference type="Gene3D" id="2.60.120.920">
    <property type="match status" value="1"/>
</dbReference>
<dbReference type="Gene3D" id="3.30.160.60">
    <property type="entry name" value="Classic Zinc Finger"/>
    <property type="match status" value="1"/>
</dbReference>
<dbReference type="Gene3D" id="3.30.40.10">
    <property type="entry name" value="Zinc/RING finger domain, C3HC4 (zinc finger)"/>
    <property type="match status" value="1"/>
</dbReference>
<dbReference type="InterPro" id="IPR001870">
    <property type="entry name" value="B30.2/SPRY"/>
</dbReference>
<dbReference type="InterPro" id="IPR043136">
    <property type="entry name" value="B30.2/SPRY_sf"/>
</dbReference>
<dbReference type="InterPro" id="IPR003879">
    <property type="entry name" value="Butyrophylin_SPRY"/>
</dbReference>
<dbReference type="InterPro" id="IPR013320">
    <property type="entry name" value="ConA-like_dom_sf"/>
</dbReference>
<dbReference type="InterPro" id="IPR035827">
    <property type="entry name" value="PRY/SPRY_TRIM22"/>
</dbReference>
<dbReference type="InterPro" id="IPR003877">
    <property type="entry name" value="SPRY_dom"/>
</dbReference>
<dbReference type="InterPro" id="IPR050143">
    <property type="entry name" value="TRIM/RBCC"/>
</dbReference>
<dbReference type="InterPro" id="IPR027370">
    <property type="entry name" value="Znf-RING_euk"/>
</dbReference>
<dbReference type="InterPro" id="IPR000315">
    <property type="entry name" value="Znf_B-box"/>
</dbReference>
<dbReference type="InterPro" id="IPR001841">
    <property type="entry name" value="Znf_RING"/>
</dbReference>
<dbReference type="InterPro" id="IPR013083">
    <property type="entry name" value="Znf_RING/FYVE/PHD"/>
</dbReference>
<dbReference type="InterPro" id="IPR017907">
    <property type="entry name" value="Znf_RING_CS"/>
</dbReference>
<dbReference type="PANTHER" id="PTHR24103">
    <property type="entry name" value="E3 UBIQUITIN-PROTEIN LIGASE TRIM"/>
    <property type="match status" value="1"/>
</dbReference>
<dbReference type="Pfam" id="PF00622">
    <property type="entry name" value="SPRY"/>
    <property type="match status" value="1"/>
</dbReference>
<dbReference type="Pfam" id="PF00643">
    <property type="entry name" value="zf-B_box"/>
    <property type="match status" value="1"/>
</dbReference>
<dbReference type="Pfam" id="PF13445">
    <property type="entry name" value="zf-RING_UBOX"/>
    <property type="match status" value="1"/>
</dbReference>
<dbReference type="PRINTS" id="PR01407">
    <property type="entry name" value="BUTYPHLNCDUF"/>
</dbReference>
<dbReference type="SMART" id="SM00336">
    <property type="entry name" value="BBOX"/>
    <property type="match status" value="1"/>
</dbReference>
<dbReference type="SMART" id="SM00184">
    <property type="entry name" value="RING"/>
    <property type="match status" value="1"/>
</dbReference>
<dbReference type="SMART" id="SM00449">
    <property type="entry name" value="SPRY"/>
    <property type="match status" value="1"/>
</dbReference>
<dbReference type="SUPFAM" id="SSF57845">
    <property type="entry name" value="B-box zinc-binding domain"/>
    <property type="match status" value="1"/>
</dbReference>
<dbReference type="SUPFAM" id="SSF49899">
    <property type="entry name" value="Concanavalin A-like lectins/glucanases"/>
    <property type="match status" value="1"/>
</dbReference>
<dbReference type="SUPFAM" id="SSF57850">
    <property type="entry name" value="RING/U-box"/>
    <property type="match status" value="1"/>
</dbReference>
<dbReference type="PROSITE" id="PS50188">
    <property type="entry name" value="B302_SPRY"/>
    <property type="match status" value="1"/>
</dbReference>
<dbReference type="PROSITE" id="PS50119">
    <property type="entry name" value="ZF_BBOX"/>
    <property type="match status" value="1"/>
</dbReference>
<dbReference type="PROSITE" id="PS00518">
    <property type="entry name" value="ZF_RING_1"/>
    <property type="match status" value="1"/>
</dbReference>
<dbReference type="PROSITE" id="PS50089">
    <property type="entry name" value="ZF_RING_2"/>
    <property type="match status" value="1"/>
</dbReference>
<proteinExistence type="evidence at protein level"/>
<comment type="function">
    <text evidence="8 9 10 13 14 15 16 17 18">Interferon-induced E3 ubiquitin ligase that plays important roles in innate and adaptive immunity (PubMed:25683609, PubMed:35777501). Restricts the replication of many viruses including HIV-1, encephalomyocarditis virus (EMCV), hepatitis B virus (HBV), hepatitis C virus (HCV) or Zika virus (ZIKV) (PubMed:25683609, PubMed:35777501, PubMed:36042495). Mechanistically, negatively regulates HCV replication by promoting ubiquitination and subsequent degradation of viral NS5A (PubMed:25683609). Also acts by promoting the degradation of Zika virus NS1 and NS3 proteins through proteasomal degradation (PubMed:36042495). Acts as a suppressor of basal HIV-1 LTR-driven transcription by preventing Sp1 binding to the HIV-1 promoter (PubMed:26683615). Also plays a role in antiviral immunity by co-regulating together with NT5C2 the RIGI/NF-kappa-B pathway by promoting 'Lys-63'-linked ubiquitination of RIGI, while NT5C2 is responsible for 'Lys-48'-linked ubiquitination of RIGI (PubMed:36159777). Participates in adaptive immunity by suppressing the amount of MHC class II protein in a negative feedback manner in order to limit the extent of MHC class II induction (PubMed:35777501).</text>
</comment>
<comment type="catalytic activity">
    <reaction evidence="9 14">
        <text>S-ubiquitinyl-[E2 ubiquitin-conjugating enzyme]-L-cysteine + [acceptor protein]-L-lysine = [E2 ubiquitin-conjugating enzyme]-L-cysteine + N(6)-ubiquitinyl-[acceptor protein]-L-lysine.</text>
        <dbReference type="EC" id="2.3.2.27"/>
    </reaction>
</comment>
<comment type="pathway">
    <text>Protein modification; protein ubiquitination.</text>
</comment>
<comment type="subunit">
    <text evidence="7">Homotrimer (PubMed:17156811).</text>
</comment>
<comment type="subunit">
    <text evidence="8">(Microbial infection) Interacts with HIV-1 Gag polyprotein; this interaction seems to reduce gag production or virus budding.</text>
</comment>
<comment type="subunit">
    <text evidence="10">(Microbial infection) Interacts with EMCV protease 3C; this interaction leads to viral protease ubiquitination.</text>
</comment>
<comment type="interaction">
    <interactant intactId="EBI-954123">
        <id>Q8IYM9</id>
    </interactant>
    <interactant intactId="EBI-7445625">
        <id>Q9HC29</id>
        <label>NOD2</label>
    </interactant>
    <organismsDiffer>false</organismsDiffer>
    <experiments>5</experiments>
</comment>
<comment type="interaction">
    <interactant intactId="EBI-954123">
        <id>Q8IYM9</id>
    </interactant>
    <interactant intactId="EBI-742388">
        <id>Q9H8W4</id>
        <label>PLEKHF2</label>
    </interactant>
    <organismsDiffer>false</organismsDiffer>
    <experiments>3</experiments>
</comment>
<comment type="subcellular location">
    <subcellularLocation>
        <location evidence="7 14">Cytoplasm</location>
    </subcellularLocation>
    <subcellularLocation>
        <location evidence="7">Nucleus</location>
    </subcellularLocation>
    <subcellularLocation>
        <location>Nucleus speckle</location>
    </subcellularLocation>
    <subcellularLocation>
        <location>Nucleus</location>
        <location>Cajal body</location>
    </subcellularLocation>
    <text>Localizes predominantly to the nucleus, found in cytoplasm to some extent. Forms distinct nuclear bodies that undergo dynamic changes during cell cycle progression. Nuclear bodies start to form in the early G0/G1 phase but become speckle-like in the S-phase and completely dispersed in mitosis. 35% of TRIM22 nuclear bodies overlap or are found adjacent to Cajal bodies.</text>
</comment>
<comment type="alternative products">
    <event type="alternative splicing"/>
    <isoform>
        <id>Q8IYM9-1</id>
        <name>1</name>
        <sequence type="displayed"/>
    </isoform>
    <isoform>
        <id>Q8IYM9-2</id>
        <name>2</name>
        <sequence type="described" ref="VSP_012060"/>
    </isoform>
</comment>
<comment type="tissue specificity">
    <text evidence="19">Strongly expressed in peripheral blood leukocytes, spleen, thymus, and ovary. Expressed at basal levels in other tissues.</text>
</comment>
<comment type="induction">
    <text evidence="5 8 11 14 16 17 19">By interferons alpha and beta (PubMed:25683609). Up-regulated by p53/TP53. Dramatically induced by progesterone in MDA-MB-231-derived ABC28 cells and T47D cells. By interferon gamma (PubMed:35777501). Expression is also modulated in response to several viruses and viral antigens (PubMed:36042495).</text>
</comment>
<comment type="domain">
    <text>The C-terminal SPRY domain is required for the transcriptional suppressor activity, probably by mediating correct nuclear localization. Residues 491-494 are essential for nuclear localization and nuclear bodies formation.</text>
</comment>
<comment type="domain">
    <text>The RING domain is essential for antiviral activity and for TRIM22 nuclear bodies (NB) formation but is not necessary for nuclear localization.</text>
</comment>
<comment type="PTM">
    <text evidence="9">Auto-ubiquitinated.</text>
</comment>
<comment type="similarity">
    <text evidence="21">Belongs to the TRIM/RBCC family.</text>
</comment>
<comment type="sequence caution" evidence="21">
    <conflict type="frameshift">
        <sequence resource="EMBL-CDS" id="CAA57684"/>
    </conflict>
</comment>
<sequence>MDFSVKVDIEKEVTCPICLELLTEPLSLDCGHSFCQACITAKIKESVIISRGESSCPVCQTRFQPGNLRPNRHLANIVERVKEVKMSPQEGQKRDVCEHHGKKLQIFCKEDGKVICWVCELSQEHQGHQTFRINEVVKECQEKLQVALQRLIKEDQEAEKLEDDIRQERTAWKNYIQIERQKILKGFNEMRVILDNEEQRELQKLEEGEVNVLDNLAAATDQLVQQRQDASTLISDLQRRLRGSSVEMLQDVIDVMKRSESWTLKKPKSVSKKLKSVFRVPDLSGMLQVLKELTDVQYYWVDVMLNPGSATSNVAISVDQRQVKTVRTCTFKNSNPCDFSAFGVFGCQYFSSGKYYWEVDVSGKIAWILGVHSKISSLNKRKSSGFAFDPSVNYSKVYSRYRPQYGYWVIGLQNTCEYNAFEDSSSSDPKVLTLFMAVPPCRIGVFLDYEAGIVSFFNVTNHGALIYKFSGCRFSRPAYPYFNPWNCLVPMTVCPPSS</sequence>
<evidence type="ECO:0000255" key="1"/>
<evidence type="ECO:0000255" key="2">
    <source>
        <dbReference type="PROSITE-ProRule" id="PRU00024"/>
    </source>
</evidence>
<evidence type="ECO:0000255" key="3">
    <source>
        <dbReference type="PROSITE-ProRule" id="PRU00175"/>
    </source>
</evidence>
<evidence type="ECO:0000255" key="4">
    <source>
        <dbReference type="PROSITE-ProRule" id="PRU00548"/>
    </source>
</evidence>
<evidence type="ECO:0000269" key="5">
    <source>
    </source>
</evidence>
<evidence type="ECO:0000269" key="6">
    <source>
    </source>
</evidence>
<evidence type="ECO:0000269" key="7">
    <source>
    </source>
</evidence>
<evidence type="ECO:0000269" key="8">
    <source>
    </source>
</evidence>
<evidence type="ECO:0000269" key="9">
    <source>
    </source>
</evidence>
<evidence type="ECO:0000269" key="10">
    <source>
    </source>
</evidence>
<evidence type="ECO:0000269" key="11">
    <source>
    </source>
</evidence>
<evidence type="ECO:0000269" key="12">
    <source>
    </source>
</evidence>
<evidence type="ECO:0000269" key="13">
    <source>
    </source>
</evidence>
<evidence type="ECO:0000269" key="14">
    <source>
    </source>
</evidence>
<evidence type="ECO:0000269" key="15">
    <source>
    </source>
</evidence>
<evidence type="ECO:0000269" key="16">
    <source>
    </source>
</evidence>
<evidence type="ECO:0000269" key="17">
    <source>
    </source>
</evidence>
<evidence type="ECO:0000269" key="18">
    <source>
    </source>
</evidence>
<evidence type="ECO:0000269" key="19">
    <source>
    </source>
</evidence>
<evidence type="ECO:0000303" key="20">
    <source>
    </source>
</evidence>
<evidence type="ECO:0000305" key="21"/>
<organism>
    <name type="scientific">Homo sapiens</name>
    <name type="common">Human</name>
    <dbReference type="NCBI Taxonomy" id="9606"/>
    <lineage>
        <taxon>Eukaryota</taxon>
        <taxon>Metazoa</taxon>
        <taxon>Chordata</taxon>
        <taxon>Craniata</taxon>
        <taxon>Vertebrata</taxon>
        <taxon>Euteleostomi</taxon>
        <taxon>Mammalia</taxon>
        <taxon>Eutheria</taxon>
        <taxon>Euarchontoglires</taxon>
        <taxon>Primates</taxon>
        <taxon>Haplorrhini</taxon>
        <taxon>Catarrhini</taxon>
        <taxon>Hominidae</taxon>
        <taxon>Homo</taxon>
    </lineage>
</organism>
<reference key="1">
    <citation type="journal article" date="1995" name="J. Biol. Chem.">
        <title>Molecular cloning of a new interferon-induced factor that represses human immunodeficiency virus type 1 long terminal repeat expression.</title>
        <authorList>
            <person name="Tissot C."/>
            <person name="Mechti N."/>
        </authorList>
    </citation>
    <scope>NUCLEOTIDE SEQUENCE [MRNA] (ISOFORM 2)</scope>
    <scope>INDUCTION</scope>
    <scope>TISSUE SPECIFICITY</scope>
    <scope>VARIANT THR-242</scope>
</reference>
<reference key="2">
    <citation type="journal article" date="2004" name="Genome Res.">
        <title>The status, quality, and expansion of the NIH full-length cDNA project: the Mammalian Gene Collection (MGC).</title>
        <authorList>
            <consortium name="The MGC Project Team"/>
        </authorList>
    </citation>
    <scope>NUCLEOTIDE SEQUENCE [LARGE SCALE MRNA] (ISOFORM 1)</scope>
    <scope>VARIANT ASN-155</scope>
    <source>
        <tissue>Lung</tissue>
        <tissue>Testis</tissue>
    </source>
</reference>
<reference key="3">
    <citation type="journal article" date="2001" name="EMBO J.">
        <title>The tripartite motif family identifies cell compartments.</title>
        <authorList>
            <person name="Reymond A."/>
            <person name="Meroni G."/>
            <person name="Fantozzi A."/>
            <person name="Merla G."/>
            <person name="Cairo S."/>
            <person name="Luzi L."/>
            <person name="Riganelli D."/>
            <person name="Zanaria E."/>
            <person name="Messali S."/>
            <person name="Cainarca S."/>
            <person name="Guffanti A."/>
            <person name="Minucci S."/>
            <person name="Pelicci P.G."/>
            <person name="Ballabio A."/>
        </authorList>
    </citation>
    <scope>SUBCELLULAR LOCATION</scope>
</reference>
<reference key="4">
    <citation type="journal article" date="2004" name="Oncogene">
        <title>Staf50 is a novel p53 target gene conferring reduced clonogenic growth of leukemic U-937 cells.</title>
        <authorList>
            <person name="Obad S."/>
            <person name="Brunnstrom H."/>
            <person name="Vallon-Christersson J."/>
            <person name="Borg A."/>
            <person name="Drott K."/>
            <person name="Gullberg U."/>
        </authorList>
    </citation>
    <scope>INDUCTION</scope>
</reference>
<reference key="5">
    <citation type="journal article" date="2007" name="Virology">
        <title>Unique features of TRIM5alpha among closely related human TRIM family members.</title>
        <authorList>
            <person name="Li X."/>
            <person name="Gold B."/>
            <person name="O'hUigin C."/>
            <person name="Diaz-Griffero F."/>
            <person name="Song B."/>
            <person name="Si Z."/>
            <person name="Li Y."/>
            <person name="Yuan W."/>
            <person name="Stremlau M."/>
            <person name="Mische C."/>
            <person name="Javanbakht H."/>
            <person name="Scally M."/>
            <person name="Winkler C."/>
            <person name="Dean M."/>
            <person name="Sodroski J."/>
        </authorList>
    </citation>
    <scope>SUBUNIT</scope>
    <scope>SUBCELLULAR LOCATION</scope>
</reference>
<reference key="6">
    <citation type="journal article" date="2008" name="Biochem. Biophys. Res. Commun.">
        <title>Identification of TRIM22 as a RING finger E3 ubiquitin ligase.</title>
        <authorList>
            <person name="Duan Z."/>
            <person name="Gao B."/>
            <person name="Xu W."/>
            <person name="Xiong S."/>
        </authorList>
    </citation>
    <scope>FUNCTION</scope>
    <scope>SUBCELLULAR LOCATION</scope>
    <scope>AUTOUBIQUITINATION</scope>
    <scope>MUTAGENESIS OF CYS-15</scope>
    <scope>CATALYTIC ACTIVITY</scope>
</reference>
<reference key="7">
    <citation type="journal article" date="2008" name="PLoS Pathog.">
        <title>The interferon response inhibits HIV particle production by induction of TRIM22.</title>
        <authorList>
            <person name="Barr S.D."/>
            <person name="Smiley J.R."/>
            <person name="Bushman F.D."/>
        </authorList>
    </citation>
    <scope>FUNCTION</scope>
    <scope>INDUCTION</scope>
    <scope>INTERACTION WITH HIV-1 GAG POLYPROTEIN (MICROBIAL INFECTION)</scope>
    <scope>MUTAGENESIS OF CYS-15 AND CYS-18</scope>
</reference>
<reference key="8">
    <citation type="journal article" date="2009" name="Exp. Cell Res.">
        <title>Dynamic localization of tripartite motif-containing 22 in nuclear and nucleolar bodies.</title>
        <authorList>
            <person name="Sivaramakrishnan G."/>
            <person name="Sun Y."/>
            <person name="Tan S.K."/>
            <person name="Lin V.C."/>
        </authorList>
    </citation>
    <scope>SUBCELLULAR LOCATION</scope>
    <scope>INDUCTION</scope>
</reference>
<reference key="9">
    <citation type="journal article" date="2009" name="FEBS Lett.">
        <title>B30.2/SPRY domain in tripartite motif-containing 22 is essential for the formation of distinct nuclear bodies.</title>
        <authorList>
            <person name="Sivaramakrishnan G."/>
            <person name="Sun Y."/>
            <person name="Rajmohan R."/>
            <person name="Lin V.C."/>
        </authorList>
    </citation>
    <scope>SUBCELLULAR LOCATION</scope>
    <scope>MUTAGENESIS OF CYS-15; CYS-18 AND 493-VAL-CYS-494</scope>
</reference>
<reference key="10">
    <citation type="journal article" date="2009" name="Hepatology">
        <title>Tripartite motif-containing 22 inhibits the activity of hepatitis B virus core promoter, which is dependent on nuclear-located RING domain.</title>
        <authorList>
            <person name="Gao B."/>
            <person name="Duan Z."/>
            <person name="Xu W."/>
            <person name="Xiong S."/>
        </authorList>
    </citation>
    <scope>FUNCTION</scope>
</reference>
<reference key="11">
    <citation type="journal article" date="2009" name="J. Gen. Virol.">
        <title>TRIM22 E3 ubiquitin ligase activity is required to mediate antiviral activity against encephalomyocarditis virus.</title>
        <authorList>
            <person name="Eldin P."/>
            <person name="Papon L."/>
            <person name="Oteiza A."/>
            <person name="Brocchi E."/>
            <person name="Lawson T.G."/>
            <person name="Mechti N."/>
        </authorList>
    </citation>
    <scope>FUNCTION</scope>
    <scope>INTERACTION WITH EMCV PROTEASE 3C (MICROBIAL INFECTION)</scope>
</reference>
<reference key="12">
    <citation type="journal article" date="2011" name="BMC Syst. Biol.">
        <title>Initial characterization of the human central proteome.</title>
        <authorList>
            <person name="Burkard T.R."/>
            <person name="Planyavsky M."/>
            <person name="Kaupe I."/>
            <person name="Breitwieser F.P."/>
            <person name="Buerckstuemmer T."/>
            <person name="Bennett K.L."/>
            <person name="Superti-Furga G."/>
            <person name="Colinge J."/>
        </authorList>
    </citation>
    <scope>IDENTIFICATION BY MASS SPECTROMETRY [LARGE SCALE ANALYSIS]</scope>
</reference>
<reference key="13">
    <citation type="journal article" date="2015" name="Retrovirology">
        <title>HIV-1 transcriptional silencing caused by TRIM22 inhibition of Sp1 binding to the viral promoter.</title>
        <authorList>
            <person name="Turrini F."/>
            <person name="Marelli S."/>
            <person name="Kajaste-Rudnitski A."/>
            <person name="Lusic M."/>
            <person name="Van Lint C."/>
            <person name="Das A.T."/>
            <person name="Harwig A."/>
            <person name="Berkhout B."/>
            <person name="Vicenzi E."/>
        </authorList>
    </citation>
    <scope>FUNCTION</scope>
</reference>
<reference key="14">
    <citation type="journal article" date="2016" name="Cell. Mol. Immunol.">
        <title>Interferon alpha (IFNalpha)-induced TRIM22 interrupts HCV replication by ubiquitinating NS5A.</title>
        <authorList>
            <person name="Yang C."/>
            <person name="Zhao X."/>
            <person name="Sun D."/>
            <person name="Yang L."/>
            <person name="Chong C."/>
            <person name="Pan Y."/>
            <person name="Chi X."/>
            <person name="Gao Y."/>
            <person name="Wang M."/>
            <person name="Shi X."/>
            <person name="Sun H."/>
            <person name="Lv J."/>
            <person name="Gao Y."/>
            <person name="Zhong J."/>
            <person name="Niu J."/>
            <person name="Sun B."/>
        </authorList>
    </citation>
    <scope>FUNCTION</scope>
    <scope>INDUCTION BY INTERFERON ALPHA</scope>
    <scope>SUBCELLULAR LOCATION</scope>
    <scope>CATALYTIC ACTIVITY</scope>
</reference>
<reference key="15">
    <citation type="journal article" date="2022" name="Biochim. Biophys. Acta">
        <title>TRIM22 negatively regulates MHC-II expression.</title>
        <authorList>
            <person name="Inoue A."/>
            <person name="Watanabe M."/>
            <person name="Kondo T."/>
            <person name="Hirano S."/>
            <person name="Hatakeyama S."/>
        </authorList>
    </citation>
    <scope>FUNCTION</scope>
    <scope>INDUCTION BY INTERFERON-GAMMA</scope>
</reference>
<reference key="16">
    <citation type="journal article" date="2022" name="Cell Biosci.">
        <title>TRIM22 suppresses Zika virus replication by targeting NS1 and NS3 for proteasomal degradation.</title>
        <authorList>
            <person name="Zu S."/>
            <person name="Li C."/>
            <person name="Li L."/>
            <person name="Deng Y.Q."/>
            <person name="Chen X."/>
            <person name="Luo D."/>
            <person name="Ye Q."/>
            <person name="Huang Y.J."/>
            <person name="Li X.F."/>
            <person name="Zhang R.R."/>
            <person name="Sun N."/>
            <person name="Zhang X."/>
            <person name="Aliyari S.R."/>
            <person name="Nielsen-Saines K."/>
            <person name="Jung J.U."/>
            <person name="Yang H."/>
            <person name="Qin C.F."/>
            <person name="Cheng G."/>
        </authorList>
    </citation>
    <scope>FUNCTION</scope>
    <scope>INDUCTION BY ZIKA VIRUS INFECTION</scope>
</reference>
<reference key="17">
    <citation type="journal article" date="2022" name="Mol. Ther. Oncolytics.">
        <title>TRIM22 orchestrates the proliferation of GBMs and the benefits of TMZ by coordinating the modification and degradation of RIG-I.</title>
        <authorList>
            <person name="Fei X."/>
            <person name="Wu X."/>
            <person name="Dou Y.N."/>
            <person name="Sun K."/>
            <person name="Guo Q."/>
            <person name="Zhang L."/>
            <person name="Li S."/>
            <person name="Wei J."/>
            <person name="Huan Y."/>
            <person name="He X."/>
            <person name="Fei Z."/>
        </authorList>
    </citation>
    <scope>FUNCTION</scope>
</reference>
<name>TRI22_HUMAN</name>
<feature type="chain" id="PRO_0000056232" description="E3 ubiquitin-protein ligase TRIM22">
    <location>
        <begin position="1"/>
        <end position="498"/>
    </location>
</feature>
<feature type="domain" description="B30.2/SPRY" evidence="4">
    <location>
        <begin position="283"/>
        <end position="498"/>
    </location>
</feature>
<feature type="zinc finger region" description="RING-type" evidence="3">
    <location>
        <begin position="15"/>
        <end position="60"/>
    </location>
</feature>
<feature type="zinc finger region" description="B box-type" evidence="2">
    <location>
        <begin position="92"/>
        <end position="133"/>
    </location>
</feature>
<feature type="coiled-coil region" evidence="1">
    <location>
        <begin position="132"/>
        <end position="248"/>
    </location>
</feature>
<feature type="short sequence motif" description="Nuclear localization signal" evidence="1">
    <location>
        <begin position="257"/>
        <end position="275"/>
    </location>
</feature>
<feature type="binding site" evidence="2">
    <location>
        <position position="97"/>
    </location>
    <ligand>
        <name>Zn(2+)</name>
        <dbReference type="ChEBI" id="CHEBI:29105"/>
    </ligand>
</feature>
<feature type="binding site" evidence="2">
    <location>
        <position position="100"/>
    </location>
    <ligand>
        <name>Zn(2+)</name>
        <dbReference type="ChEBI" id="CHEBI:29105"/>
    </ligand>
</feature>
<feature type="binding site" evidence="2">
    <location>
        <position position="119"/>
    </location>
    <ligand>
        <name>Zn(2+)</name>
        <dbReference type="ChEBI" id="CHEBI:29105"/>
    </ligand>
</feature>
<feature type="binding site" evidence="2">
    <location>
        <position position="125"/>
    </location>
    <ligand>
        <name>Zn(2+)</name>
        <dbReference type="ChEBI" id="CHEBI:29105"/>
    </ligand>
</feature>
<feature type="splice variant" id="VSP_012060" description="In isoform 2." evidence="20">
    <location>
        <begin position="174"/>
        <end position="177"/>
    </location>
</feature>
<feature type="sequence variant" id="VAR_052134" description="In dbSNP:rs7935564." evidence="6">
    <original>D</original>
    <variation>N</variation>
    <location>
        <position position="155"/>
    </location>
</feature>
<feature type="sequence variant" id="VAR_052135" description="In dbSNP:rs2291843.">
    <original>T</original>
    <variation>A</variation>
    <location>
        <position position="232"/>
    </location>
</feature>
<feature type="sequence variant" id="VAR_052136" description="In dbSNP:rs1063303." evidence="19">
    <original>R</original>
    <variation>T</variation>
    <location>
        <position position="242"/>
    </location>
</feature>
<feature type="sequence variant" id="VAR_052137" description="In dbSNP:rs12364019.">
    <original>R</original>
    <variation>K</variation>
    <location>
        <position position="321"/>
    </location>
</feature>
<feature type="mutagenesis site" description="Loss of E3 ubiquitin-protein ligase activity, reduces auto-ubiquitination and not affect nuclear bodies formation. Loss of antiviral activity; when associated with A-18." evidence="8 9 12">
    <original>C</original>
    <variation>A</variation>
    <location>
        <position position="15"/>
    </location>
</feature>
<feature type="mutagenesis site" description="Loss of antiviral activity and not affect nuclear bodies formation; when associated with A-15." evidence="8 12">
    <original>C</original>
    <variation>A</variation>
    <location>
        <position position="18"/>
    </location>
</feature>
<feature type="mutagenesis site" description="Reduces formation of regular nuclear bodies." evidence="12">
    <original>VC</original>
    <variation>AA</variation>
    <location>
        <begin position="493"/>
        <end position="494"/>
    </location>
</feature>
<feature type="sequence conflict" description="In Ref. 1; CAA57684." evidence="21" ref="1">
    <original>A</original>
    <variation>R</variation>
    <location>
        <position position="464"/>
    </location>
</feature>